<gene>
    <name evidence="1" type="primary">accA</name>
    <name type="ordered locus">BSUIS_A1873</name>
</gene>
<organism>
    <name type="scientific">Brucella suis (strain ATCC 23445 / NCTC 10510)</name>
    <dbReference type="NCBI Taxonomy" id="470137"/>
    <lineage>
        <taxon>Bacteria</taxon>
        <taxon>Pseudomonadati</taxon>
        <taxon>Pseudomonadota</taxon>
        <taxon>Alphaproteobacteria</taxon>
        <taxon>Hyphomicrobiales</taxon>
        <taxon>Brucellaceae</taxon>
        <taxon>Brucella/Ochrobactrum group</taxon>
        <taxon>Brucella</taxon>
    </lineage>
</organism>
<keyword id="KW-0067">ATP-binding</keyword>
<keyword id="KW-0963">Cytoplasm</keyword>
<keyword id="KW-0275">Fatty acid biosynthesis</keyword>
<keyword id="KW-0276">Fatty acid metabolism</keyword>
<keyword id="KW-0444">Lipid biosynthesis</keyword>
<keyword id="KW-0443">Lipid metabolism</keyword>
<keyword id="KW-0547">Nucleotide-binding</keyword>
<keyword id="KW-0808">Transferase</keyword>
<evidence type="ECO:0000255" key="1">
    <source>
        <dbReference type="HAMAP-Rule" id="MF_00823"/>
    </source>
</evidence>
<evidence type="ECO:0000255" key="2">
    <source>
        <dbReference type="PROSITE-ProRule" id="PRU01137"/>
    </source>
</evidence>
<protein>
    <recommendedName>
        <fullName evidence="1">Acetyl-coenzyme A carboxylase carboxyl transferase subunit alpha</fullName>
        <shortName evidence="1">ACCase subunit alpha</shortName>
        <shortName evidence="1">Acetyl-CoA carboxylase carboxyltransferase subunit alpha</shortName>
        <ecNumber evidence="1">2.1.3.15</ecNumber>
    </recommendedName>
</protein>
<name>ACCA_BRUSI</name>
<proteinExistence type="inferred from homology"/>
<dbReference type="EC" id="2.1.3.15" evidence="1"/>
<dbReference type="EMBL" id="CP000911">
    <property type="protein sequence ID" value="ABY38886.1"/>
    <property type="molecule type" value="Genomic_DNA"/>
</dbReference>
<dbReference type="RefSeq" id="WP_002965096.1">
    <property type="nucleotide sequence ID" value="NC_010169.1"/>
</dbReference>
<dbReference type="SMR" id="B0CJD4"/>
<dbReference type="KEGG" id="bmt:BSUIS_A1873"/>
<dbReference type="HOGENOM" id="CLU_015486_0_2_5"/>
<dbReference type="UniPathway" id="UPA00655">
    <property type="reaction ID" value="UER00711"/>
</dbReference>
<dbReference type="Proteomes" id="UP000008545">
    <property type="component" value="Chromosome I"/>
</dbReference>
<dbReference type="GO" id="GO:0009317">
    <property type="term" value="C:acetyl-CoA carboxylase complex"/>
    <property type="evidence" value="ECO:0007669"/>
    <property type="project" value="InterPro"/>
</dbReference>
<dbReference type="GO" id="GO:0003989">
    <property type="term" value="F:acetyl-CoA carboxylase activity"/>
    <property type="evidence" value="ECO:0007669"/>
    <property type="project" value="InterPro"/>
</dbReference>
<dbReference type="GO" id="GO:0005524">
    <property type="term" value="F:ATP binding"/>
    <property type="evidence" value="ECO:0007669"/>
    <property type="project" value="UniProtKB-KW"/>
</dbReference>
<dbReference type="GO" id="GO:0016743">
    <property type="term" value="F:carboxyl- or carbamoyltransferase activity"/>
    <property type="evidence" value="ECO:0007669"/>
    <property type="project" value="UniProtKB-UniRule"/>
</dbReference>
<dbReference type="GO" id="GO:0006633">
    <property type="term" value="P:fatty acid biosynthetic process"/>
    <property type="evidence" value="ECO:0007669"/>
    <property type="project" value="UniProtKB-KW"/>
</dbReference>
<dbReference type="GO" id="GO:2001295">
    <property type="term" value="P:malonyl-CoA biosynthetic process"/>
    <property type="evidence" value="ECO:0007669"/>
    <property type="project" value="UniProtKB-UniRule"/>
</dbReference>
<dbReference type="Gene3D" id="3.90.226.10">
    <property type="entry name" value="2-enoyl-CoA Hydratase, Chain A, domain 1"/>
    <property type="match status" value="1"/>
</dbReference>
<dbReference type="HAMAP" id="MF_00823">
    <property type="entry name" value="AcetylCoA_CT_alpha"/>
    <property type="match status" value="1"/>
</dbReference>
<dbReference type="InterPro" id="IPR001095">
    <property type="entry name" value="Acetyl_CoA_COase_a_su"/>
</dbReference>
<dbReference type="InterPro" id="IPR029045">
    <property type="entry name" value="ClpP/crotonase-like_dom_sf"/>
</dbReference>
<dbReference type="InterPro" id="IPR011763">
    <property type="entry name" value="COA_CT_C"/>
</dbReference>
<dbReference type="NCBIfam" id="TIGR00513">
    <property type="entry name" value="accA"/>
    <property type="match status" value="1"/>
</dbReference>
<dbReference type="NCBIfam" id="NF041504">
    <property type="entry name" value="AccA_sub"/>
    <property type="match status" value="1"/>
</dbReference>
<dbReference type="NCBIfam" id="NF004344">
    <property type="entry name" value="PRK05724.1"/>
    <property type="match status" value="1"/>
</dbReference>
<dbReference type="PANTHER" id="PTHR42853">
    <property type="entry name" value="ACETYL-COENZYME A CARBOXYLASE CARBOXYL TRANSFERASE SUBUNIT ALPHA"/>
    <property type="match status" value="1"/>
</dbReference>
<dbReference type="PANTHER" id="PTHR42853:SF3">
    <property type="entry name" value="ACETYL-COENZYME A CARBOXYLASE CARBOXYL TRANSFERASE SUBUNIT ALPHA, CHLOROPLASTIC"/>
    <property type="match status" value="1"/>
</dbReference>
<dbReference type="Pfam" id="PF03255">
    <property type="entry name" value="ACCA"/>
    <property type="match status" value="1"/>
</dbReference>
<dbReference type="PRINTS" id="PR01069">
    <property type="entry name" value="ACCCTRFRASEA"/>
</dbReference>
<dbReference type="SUPFAM" id="SSF52096">
    <property type="entry name" value="ClpP/crotonase"/>
    <property type="match status" value="1"/>
</dbReference>
<dbReference type="PROSITE" id="PS50989">
    <property type="entry name" value="COA_CT_CTER"/>
    <property type="match status" value="1"/>
</dbReference>
<comment type="function">
    <text evidence="1">Component of the acetyl coenzyme A carboxylase (ACC) complex. First, biotin carboxylase catalyzes the carboxylation of biotin on its carrier protein (BCCP) and then the CO(2) group is transferred by the carboxyltransferase to acetyl-CoA to form malonyl-CoA.</text>
</comment>
<comment type="catalytic activity">
    <reaction evidence="1">
        <text>N(6)-carboxybiotinyl-L-lysyl-[protein] + acetyl-CoA = N(6)-biotinyl-L-lysyl-[protein] + malonyl-CoA</text>
        <dbReference type="Rhea" id="RHEA:54728"/>
        <dbReference type="Rhea" id="RHEA-COMP:10505"/>
        <dbReference type="Rhea" id="RHEA-COMP:10506"/>
        <dbReference type="ChEBI" id="CHEBI:57288"/>
        <dbReference type="ChEBI" id="CHEBI:57384"/>
        <dbReference type="ChEBI" id="CHEBI:83144"/>
        <dbReference type="ChEBI" id="CHEBI:83145"/>
        <dbReference type="EC" id="2.1.3.15"/>
    </reaction>
</comment>
<comment type="pathway">
    <text evidence="1">Lipid metabolism; malonyl-CoA biosynthesis; malonyl-CoA from acetyl-CoA: step 1/1.</text>
</comment>
<comment type="subunit">
    <text evidence="1">Acetyl-CoA carboxylase is a heterohexamer composed of biotin carboxyl carrier protein (AccB), biotin carboxylase (AccC) and two subunits each of ACCase subunit alpha (AccA) and ACCase subunit beta (AccD).</text>
</comment>
<comment type="subcellular location">
    <subcellularLocation>
        <location evidence="1">Cytoplasm</location>
    </subcellularLocation>
</comment>
<comment type="similarity">
    <text evidence="1">Belongs to the AccA family.</text>
</comment>
<feature type="chain" id="PRO_1000083921" description="Acetyl-coenzyme A carboxylase carboxyl transferase subunit alpha">
    <location>
        <begin position="1"/>
        <end position="317"/>
    </location>
</feature>
<feature type="domain" description="CoA carboxyltransferase C-terminal" evidence="2">
    <location>
        <begin position="40"/>
        <end position="293"/>
    </location>
</feature>
<reference key="1">
    <citation type="submission" date="2007-12" db="EMBL/GenBank/DDBJ databases">
        <title>Brucella suis ATCC 23445 whole genome shotgun sequencing project.</title>
        <authorList>
            <person name="Setubal J.C."/>
            <person name="Bowns C."/>
            <person name="Boyle S."/>
            <person name="Crasta O.R."/>
            <person name="Czar M.J."/>
            <person name="Dharmanolla C."/>
            <person name="Gillespie J.J."/>
            <person name="Kenyon R.W."/>
            <person name="Lu J."/>
            <person name="Mane S."/>
            <person name="Mohapatra S."/>
            <person name="Nagrani S."/>
            <person name="Purkayastha A."/>
            <person name="Rajasimha H.K."/>
            <person name="Shallom J.M."/>
            <person name="Shallom S."/>
            <person name="Shukla M."/>
            <person name="Snyder E.E."/>
            <person name="Sobral B.W."/>
            <person name="Wattam A.R."/>
            <person name="Will R."/>
            <person name="Williams K."/>
            <person name="Yoo H."/>
            <person name="Bruce D."/>
            <person name="Detter C."/>
            <person name="Munk C."/>
            <person name="Brettin T.S."/>
        </authorList>
    </citation>
    <scope>NUCLEOTIDE SEQUENCE [LARGE SCALE GENOMIC DNA]</scope>
    <source>
        <strain>ATCC 23445 / NCTC 10510</strain>
    </source>
</reference>
<sequence length="317" mass="35013">MYNYLDFEKPVADLEGQILELKKLAQEQGSVEMGDEISRLEKRSADALKDIYRKLTPWQKAQIARHPDRPHCLEYIDRLFTEFTPLAGDRKFANDEALQAGFGRFNGTPVAIIGQEKGSDTKTRLKHNFGSARPEGYRKAVRIMEMADRFQLPLITFVDTAGAYPGVSAEERGQAEAIARSTAECLKLRVPVISIIIGEGGSGGAIAIAVANRVYMLEHSIYSVISPEGAASILWHDSTRAKDAASNMRITAQDLFDLKIIDGIIPEPLGGAHRGKESVIDATGDIIAASLRSMKDIDGETLKQERRQKFLEIGRNI</sequence>
<accession>B0CJD4</accession>